<protein>
    <recommendedName>
        <fullName>Uncharacterized leukocidin-like protein 1</fullName>
    </recommendedName>
</protein>
<keyword id="KW-0732">Signal</keyword>
<evidence type="ECO:0000255" key="1"/>
<evidence type="ECO:0000305" key="2"/>
<comment type="similarity">
    <text evidence="2">Belongs to the aerolysin family.</text>
</comment>
<gene>
    <name type="ordered locus">SAR2107</name>
</gene>
<sequence length="339" mass="38674">MIKQVCKNITICSLALSTALTVFPASSYAEIKSKITTVSEKNLDGDTKMYTRTATTSDTEKKISQSLQFNFLTEPNYDKETVFIKAKGTIGSGLKILNPNGYWNSTLRWPGSYSVSIQNVDDNNNSTNVTDFAPKNQDESREVKYTYGYKTGGDFSINRGGLTGNITKEKNYSETISYQQPSYRTLIDQPTTNKGVAWKVEAHSINNMGHDHTRQLTNDSDDRVKSEIFSLTRNGNLWAKDNFTPKNKMPVTVSEGFNPEFLAVMSHDKNDKGKSRFIVHYKRSMDDFKLDWNKHGFWGYWSGENHVDQKEEKLSALYEVDWKTHDVKLIKTINDKEQK</sequence>
<organism>
    <name type="scientific">Staphylococcus aureus (strain MRSA252)</name>
    <dbReference type="NCBI Taxonomy" id="282458"/>
    <lineage>
        <taxon>Bacteria</taxon>
        <taxon>Bacillati</taxon>
        <taxon>Bacillota</taxon>
        <taxon>Bacilli</taxon>
        <taxon>Bacillales</taxon>
        <taxon>Staphylococcaceae</taxon>
        <taxon>Staphylococcus</taxon>
    </lineage>
</organism>
<proteinExistence type="inferred from homology"/>
<name>LUKL1_STAAR</name>
<dbReference type="EMBL" id="BX571856">
    <property type="protein sequence ID" value="CAG41089.1"/>
    <property type="molecule type" value="Genomic_DNA"/>
</dbReference>
<dbReference type="RefSeq" id="WP_000595617.1">
    <property type="nucleotide sequence ID" value="NC_002952.2"/>
</dbReference>
<dbReference type="SMR" id="Q6GF50"/>
<dbReference type="KEGG" id="sar:SAR2107"/>
<dbReference type="HOGENOM" id="CLU_055394_0_1_9"/>
<dbReference type="Proteomes" id="UP000000596">
    <property type="component" value="Chromosome"/>
</dbReference>
<dbReference type="GO" id="GO:0005576">
    <property type="term" value="C:extracellular region"/>
    <property type="evidence" value="ECO:0007669"/>
    <property type="project" value="InterPro"/>
</dbReference>
<dbReference type="GO" id="GO:0051715">
    <property type="term" value="P:cytolysis in another organism"/>
    <property type="evidence" value="ECO:0007669"/>
    <property type="project" value="InterPro"/>
</dbReference>
<dbReference type="Gene3D" id="2.70.240.10">
    <property type="entry name" value="Leukocidin/porin MspA"/>
    <property type="match status" value="1"/>
</dbReference>
<dbReference type="InterPro" id="IPR003963">
    <property type="entry name" value="Bi-component_toxin_staph"/>
</dbReference>
<dbReference type="InterPro" id="IPR016183">
    <property type="entry name" value="Leukocidin/Hemolysin_toxin"/>
</dbReference>
<dbReference type="InterPro" id="IPR036435">
    <property type="entry name" value="Leukocidin/porin_MspA_sf"/>
</dbReference>
<dbReference type="NCBIfam" id="TIGR01002">
    <property type="entry name" value="hlyII"/>
    <property type="match status" value="1"/>
</dbReference>
<dbReference type="Pfam" id="PF07968">
    <property type="entry name" value="Leukocidin"/>
    <property type="match status" value="1"/>
</dbReference>
<dbReference type="PRINTS" id="PR01468">
    <property type="entry name" value="BICOMPNTOXIN"/>
</dbReference>
<dbReference type="SUPFAM" id="SSF56959">
    <property type="entry name" value="Leukocidin-like"/>
    <property type="match status" value="1"/>
</dbReference>
<accession>Q6GF50</accession>
<feature type="signal peptide" evidence="1">
    <location>
        <begin position="1"/>
        <end position="29"/>
    </location>
</feature>
<feature type="chain" id="PRO_0000298632" description="Uncharacterized leukocidin-like protein 1">
    <location>
        <begin position="30"/>
        <end position="339"/>
    </location>
</feature>
<reference key="1">
    <citation type="journal article" date="2004" name="Proc. Natl. Acad. Sci. U.S.A.">
        <title>Complete genomes of two clinical Staphylococcus aureus strains: evidence for the rapid evolution of virulence and drug resistance.</title>
        <authorList>
            <person name="Holden M.T.G."/>
            <person name="Feil E.J."/>
            <person name="Lindsay J.A."/>
            <person name="Peacock S.J."/>
            <person name="Day N.P.J."/>
            <person name="Enright M.C."/>
            <person name="Foster T.J."/>
            <person name="Moore C.E."/>
            <person name="Hurst L."/>
            <person name="Atkin R."/>
            <person name="Barron A."/>
            <person name="Bason N."/>
            <person name="Bentley S.D."/>
            <person name="Chillingworth C."/>
            <person name="Chillingworth T."/>
            <person name="Churcher C."/>
            <person name="Clark L."/>
            <person name="Corton C."/>
            <person name="Cronin A."/>
            <person name="Doggett J."/>
            <person name="Dowd L."/>
            <person name="Feltwell T."/>
            <person name="Hance Z."/>
            <person name="Harris B."/>
            <person name="Hauser H."/>
            <person name="Holroyd S."/>
            <person name="Jagels K."/>
            <person name="James K.D."/>
            <person name="Lennard N."/>
            <person name="Line A."/>
            <person name="Mayes R."/>
            <person name="Moule S."/>
            <person name="Mungall K."/>
            <person name="Ormond D."/>
            <person name="Quail M.A."/>
            <person name="Rabbinowitsch E."/>
            <person name="Rutherford K.M."/>
            <person name="Sanders M."/>
            <person name="Sharp S."/>
            <person name="Simmonds M."/>
            <person name="Stevens K."/>
            <person name="Whitehead S."/>
            <person name="Barrell B.G."/>
            <person name="Spratt B.G."/>
            <person name="Parkhill J."/>
        </authorList>
    </citation>
    <scope>NUCLEOTIDE SEQUENCE [LARGE SCALE GENOMIC DNA]</scope>
    <source>
        <strain>MRSA252</strain>
    </source>
</reference>